<reference key="1">
    <citation type="journal article" date="2002" name="Proc. Natl. Acad. Sci. U.S.A.">
        <title>Extensive mosaic structure revealed by the complete genome sequence of uropathogenic Escherichia coli.</title>
        <authorList>
            <person name="Welch R.A."/>
            <person name="Burland V."/>
            <person name="Plunkett G. III"/>
            <person name="Redford P."/>
            <person name="Roesch P."/>
            <person name="Rasko D."/>
            <person name="Buckles E.L."/>
            <person name="Liou S.-R."/>
            <person name="Boutin A."/>
            <person name="Hackett J."/>
            <person name="Stroud D."/>
            <person name="Mayhew G.F."/>
            <person name="Rose D.J."/>
            <person name="Zhou S."/>
            <person name="Schwartz D.C."/>
            <person name="Perna N.T."/>
            <person name="Mobley H.L.T."/>
            <person name="Donnenberg M.S."/>
            <person name="Blattner F.R."/>
        </authorList>
    </citation>
    <scope>NUCLEOTIDE SEQUENCE [LARGE SCALE GENOMIC DNA]</scope>
    <source>
        <strain>CFT073 / ATCC 700928 / UPEC</strain>
    </source>
</reference>
<keyword id="KW-0456">Lyase</keyword>
<keyword id="KW-0460">Magnesium</keyword>
<keyword id="KW-0479">Metal-binding</keyword>
<keyword id="KW-1185">Reference proteome</keyword>
<sequence length="405" mass="44690">MENIMTLPKIKQVRAWFTGGATAEKGAGGGDYHDQGANHWIDDHIATPMSKYRDYEQSRQSFGINVLGTLIVEVEAENGQTGFAVSTAGEMGCFIVEKHLNRFIEGKCVSDIKLIHDQMLNATLYYSGSGGLVMNTISCVDLALWDLFGKVVGLPVYKLLGGAVRDEIQFYATGARPDLAKEMGFIGGKMPTHWGPHDGDAGIRKDAAMVADMREKCGEDFWLMLDCWMSQDVNYAIKLAHACAPYNLKWIEECLPPQQYEGYRELKHNAPAGMMVTSGEHHGTLQSFRTLSETGIDIMQPDVGWCGGLTTLVEIAAIAKSRGQLVVPHGSSVYSHHAVITFTNTPFSEFLMTSPDCSTMRPQFDPILLNEPVPVNGRIHKSVLDKPGFGVELNRDCNLKRPYSH</sequence>
<organism>
    <name type="scientific">Escherichia coli O6:H1 (strain CFT073 / ATCC 700928 / UPEC)</name>
    <dbReference type="NCBI Taxonomy" id="199310"/>
    <lineage>
        <taxon>Bacteria</taxon>
        <taxon>Pseudomonadati</taxon>
        <taxon>Pseudomonadota</taxon>
        <taxon>Gammaproteobacteria</taxon>
        <taxon>Enterobacterales</taxon>
        <taxon>Enterobacteriaceae</taxon>
        <taxon>Escherichia</taxon>
    </lineage>
</organism>
<gene>
    <name evidence="1" type="primary">rhmD</name>
    <name type="ordered locus">c2789</name>
</gene>
<feature type="chain" id="PRO_0000351697" description="L-rhamnonate dehydratase">
    <location>
        <begin position="1"/>
        <end position="405"/>
    </location>
</feature>
<feature type="active site" description="Proton acceptor" evidence="1">
    <location>
        <position position="329"/>
    </location>
</feature>
<feature type="binding site" evidence="1">
    <location>
        <position position="33"/>
    </location>
    <ligand>
        <name>substrate</name>
    </ligand>
</feature>
<feature type="binding site" evidence="1">
    <location>
        <position position="59"/>
    </location>
    <ligand>
        <name>substrate</name>
    </ligand>
</feature>
<feature type="binding site" evidence="1">
    <location>
        <position position="226"/>
    </location>
    <ligand>
        <name>Mg(2+)</name>
        <dbReference type="ChEBI" id="CHEBI:18420"/>
    </ligand>
</feature>
<feature type="binding site" evidence="1">
    <location>
        <position position="252"/>
    </location>
    <ligand>
        <name>Mg(2+)</name>
        <dbReference type="ChEBI" id="CHEBI:18420"/>
    </ligand>
</feature>
<feature type="binding site" evidence="1">
    <location>
        <position position="280"/>
    </location>
    <ligand>
        <name>Mg(2+)</name>
        <dbReference type="ChEBI" id="CHEBI:18420"/>
    </ligand>
</feature>
<feature type="binding site" evidence="1">
    <location>
        <position position="349"/>
    </location>
    <ligand>
        <name>substrate</name>
    </ligand>
</feature>
<feature type="site" description="Increases basicity of active site His" evidence="1">
    <location>
        <position position="302"/>
    </location>
</feature>
<feature type="site" description="Transition state stabilizer" evidence="1">
    <location>
        <position position="349"/>
    </location>
</feature>
<protein>
    <recommendedName>
        <fullName evidence="1">L-rhamnonate dehydratase</fullName>
        <shortName evidence="1">RhamD</shortName>
        <ecNumber evidence="1">4.2.1.90</ecNumber>
    </recommendedName>
</protein>
<proteinExistence type="inferred from homology"/>
<dbReference type="EC" id="4.2.1.90" evidence="1"/>
<dbReference type="EMBL" id="AE014075">
    <property type="protein sequence ID" value="AAN81243.1"/>
    <property type="molecule type" value="Genomic_DNA"/>
</dbReference>
<dbReference type="SMR" id="Q8FFM8"/>
<dbReference type="STRING" id="199310.c2789"/>
<dbReference type="KEGG" id="ecc:c2789"/>
<dbReference type="eggNOG" id="COG4948">
    <property type="taxonomic scope" value="Bacteria"/>
</dbReference>
<dbReference type="HOGENOM" id="CLU_030273_1_0_6"/>
<dbReference type="BioCyc" id="ECOL199310:C2789-MONOMER"/>
<dbReference type="Proteomes" id="UP000001410">
    <property type="component" value="Chromosome"/>
</dbReference>
<dbReference type="GO" id="GO:0050032">
    <property type="term" value="F:L-rhamnonate dehydratase activity"/>
    <property type="evidence" value="ECO:0007669"/>
    <property type="project" value="UniProtKB-UniRule"/>
</dbReference>
<dbReference type="GO" id="GO:0000287">
    <property type="term" value="F:magnesium ion binding"/>
    <property type="evidence" value="ECO:0007669"/>
    <property type="project" value="UniProtKB-UniRule"/>
</dbReference>
<dbReference type="GO" id="GO:0009063">
    <property type="term" value="P:amino acid catabolic process"/>
    <property type="evidence" value="ECO:0007669"/>
    <property type="project" value="InterPro"/>
</dbReference>
<dbReference type="GO" id="GO:0016052">
    <property type="term" value="P:carbohydrate catabolic process"/>
    <property type="evidence" value="ECO:0007669"/>
    <property type="project" value="TreeGrafter"/>
</dbReference>
<dbReference type="CDD" id="cd03327">
    <property type="entry name" value="MR_like_2"/>
    <property type="match status" value="1"/>
</dbReference>
<dbReference type="FunFam" id="3.30.390.10:FF:000007">
    <property type="entry name" value="L-rhamnonate dehydratase"/>
    <property type="match status" value="1"/>
</dbReference>
<dbReference type="FunFam" id="3.20.20.120:FF:000005">
    <property type="entry name" value="Putative L-rhamnonate dehydratase"/>
    <property type="match status" value="1"/>
</dbReference>
<dbReference type="Gene3D" id="3.20.20.120">
    <property type="entry name" value="Enolase-like C-terminal domain"/>
    <property type="match status" value="1"/>
</dbReference>
<dbReference type="Gene3D" id="3.30.390.10">
    <property type="entry name" value="Enolase-like, N-terminal domain"/>
    <property type="match status" value="1"/>
</dbReference>
<dbReference type="HAMAP" id="MF_01288">
    <property type="entry name" value="Rhamnon_dehydrat"/>
    <property type="match status" value="1"/>
</dbReference>
<dbReference type="InterPro" id="IPR036849">
    <property type="entry name" value="Enolase-like_C_sf"/>
</dbReference>
<dbReference type="InterPro" id="IPR029017">
    <property type="entry name" value="Enolase-like_N"/>
</dbReference>
<dbReference type="InterPro" id="IPR029065">
    <property type="entry name" value="Enolase_C-like"/>
</dbReference>
<dbReference type="InterPro" id="IPR023444">
    <property type="entry name" value="L-Rhamnon_dehydrat"/>
</dbReference>
<dbReference type="InterPro" id="IPR018110">
    <property type="entry name" value="Mandel_Rmase/mucon_lact_enz_CS"/>
</dbReference>
<dbReference type="InterPro" id="IPR013342">
    <property type="entry name" value="Mandelate_racemase_C"/>
</dbReference>
<dbReference type="InterPro" id="IPR013341">
    <property type="entry name" value="Mandelate_racemase_N_dom"/>
</dbReference>
<dbReference type="InterPro" id="IPR046945">
    <property type="entry name" value="RHMD-like"/>
</dbReference>
<dbReference type="NCBIfam" id="NF011968">
    <property type="entry name" value="PRK15440.1"/>
    <property type="match status" value="1"/>
</dbReference>
<dbReference type="PANTHER" id="PTHR13794">
    <property type="entry name" value="ENOLASE SUPERFAMILY, MANDELATE RACEMASE"/>
    <property type="match status" value="1"/>
</dbReference>
<dbReference type="PANTHER" id="PTHR13794:SF58">
    <property type="entry name" value="MITOCHONDRIAL ENOLASE SUPERFAMILY MEMBER 1"/>
    <property type="match status" value="1"/>
</dbReference>
<dbReference type="Pfam" id="PF13378">
    <property type="entry name" value="MR_MLE_C"/>
    <property type="match status" value="1"/>
</dbReference>
<dbReference type="Pfam" id="PF02746">
    <property type="entry name" value="MR_MLE_N"/>
    <property type="match status" value="1"/>
</dbReference>
<dbReference type="SFLD" id="SFLDS00001">
    <property type="entry name" value="Enolase"/>
    <property type="match status" value="1"/>
</dbReference>
<dbReference type="SFLD" id="SFLDF00006">
    <property type="entry name" value="rhamnonate_dehydratase"/>
    <property type="match status" value="1"/>
</dbReference>
<dbReference type="SMART" id="SM00922">
    <property type="entry name" value="MR_MLE"/>
    <property type="match status" value="1"/>
</dbReference>
<dbReference type="SUPFAM" id="SSF51604">
    <property type="entry name" value="Enolase C-terminal domain-like"/>
    <property type="match status" value="1"/>
</dbReference>
<dbReference type="SUPFAM" id="SSF54826">
    <property type="entry name" value="Enolase N-terminal domain-like"/>
    <property type="match status" value="1"/>
</dbReference>
<dbReference type="PROSITE" id="PS00908">
    <property type="entry name" value="MR_MLE_1"/>
    <property type="match status" value="1"/>
</dbReference>
<comment type="function">
    <text evidence="1">Catalyzes the dehydration of L-rhamnonate to 2-keto-3-deoxy-L-rhamnonate (KDR).</text>
</comment>
<comment type="catalytic activity">
    <reaction evidence="1">
        <text>L-rhamnonate = 2-dehydro-3-deoxy-L-rhamnonate + H2O</text>
        <dbReference type="Rhea" id="RHEA:23080"/>
        <dbReference type="ChEBI" id="CHEBI:15377"/>
        <dbReference type="ChEBI" id="CHEBI:58118"/>
        <dbReference type="ChEBI" id="CHEBI:58371"/>
        <dbReference type="EC" id="4.2.1.90"/>
    </reaction>
</comment>
<comment type="cofactor">
    <cofactor evidence="1">
        <name>Mg(2+)</name>
        <dbReference type="ChEBI" id="CHEBI:18420"/>
    </cofactor>
    <text evidence="1">Binds 1 Mg(2+) ion per subunit.</text>
</comment>
<comment type="subunit">
    <text evidence="1">Homooctamer; tetramer of dimers.</text>
</comment>
<comment type="miscellaneous">
    <text evidence="1">Reaction proceeds via a syn dehydration.</text>
</comment>
<comment type="similarity">
    <text evidence="1">Belongs to the mandelate racemase/muconate lactonizing enzyme family. RhamD subfamily.</text>
</comment>
<name>RHMD_ECOL6</name>
<accession>Q8FFM8</accession>
<evidence type="ECO:0000255" key="1">
    <source>
        <dbReference type="HAMAP-Rule" id="MF_01288"/>
    </source>
</evidence>